<evidence type="ECO:0000255" key="1">
    <source>
        <dbReference type="HAMAP-Rule" id="MF_00652"/>
    </source>
</evidence>
<proteinExistence type="inferred from homology"/>
<reference key="1">
    <citation type="submission" date="2007-11" db="EMBL/GenBank/DDBJ databases">
        <authorList>
            <consortium name="The Salmonella enterica serovar Arizonae Genome Sequencing Project"/>
            <person name="McClelland M."/>
            <person name="Sanderson E.K."/>
            <person name="Porwollik S."/>
            <person name="Spieth J."/>
            <person name="Clifton W.S."/>
            <person name="Fulton R."/>
            <person name="Chunyan W."/>
            <person name="Wollam A."/>
            <person name="Shah N."/>
            <person name="Pepin K."/>
            <person name="Bhonagiri V."/>
            <person name="Nash W."/>
            <person name="Johnson M."/>
            <person name="Thiruvilangam P."/>
            <person name="Wilson R."/>
        </authorList>
    </citation>
    <scope>NUCLEOTIDE SEQUENCE [LARGE SCALE GENOMIC DNA]</scope>
    <source>
        <strain>ATCC BAA-731 / CDC346-86 / RSK2980</strain>
    </source>
</reference>
<protein>
    <recommendedName>
        <fullName evidence="1">UPF0246 protein YaaA</fullName>
    </recommendedName>
</protein>
<feature type="chain" id="PRO_1000082774" description="UPF0246 protein YaaA">
    <location>
        <begin position="1"/>
        <end position="257"/>
    </location>
</feature>
<dbReference type="EMBL" id="CP000880">
    <property type="protein sequence ID" value="ABX22832.1"/>
    <property type="molecule type" value="Genomic_DNA"/>
</dbReference>
<dbReference type="SMR" id="A9MR84"/>
<dbReference type="STRING" id="41514.SARI_02987"/>
<dbReference type="KEGG" id="ses:SARI_02987"/>
<dbReference type="HOGENOM" id="CLU_061989_0_0_6"/>
<dbReference type="Proteomes" id="UP000002084">
    <property type="component" value="Chromosome"/>
</dbReference>
<dbReference type="GO" id="GO:0005829">
    <property type="term" value="C:cytosol"/>
    <property type="evidence" value="ECO:0007669"/>
    <property type="project" value="TreeGrafter"/>
</dbReference>
<dbReference type="GO" id="GO:0033194">
    <property type="term" value="P:response to hydroperoxide"/>
    <property type="evidence" value="ECO:0007669"/>
    <property type="project" value="TreeGrafter"/>
</dbReference>
<dbReference type="HAMAP" id="MF_00652">
    <property type="entry name" value="UPF0246"/>
    <property type="match status" value="1"/>
</dbReference>
<dbReference type="InterPro" id="IPR005583">
    <property type="entry name" value="YaaA"/>
</dbReference>
<dbReference type="NCBIfam" id="NF002541">
    <property type="entry name" value="PRK02101.1-1"/>
    <property type="match status" value="1"/>
</dbReference>
<dbReference type="NCBIfam" id="NF002542">
    <property type="entry name" value="PRK02101.1-3"/>
    <property type="match status" value="1"/>
</dbReference>
<dbReference type="PANTHER" id="PTHR30283:SF4">
    <property type="entry name" value="PEROXIDE STRESS RESISTANCE PROTEIN YAAA"/>
    <property type="match status" value="1"/>
</dbReference>
<dbReference type="PANTHER" id="PTHR30283">
    <property type="entry name" value="PEROXIDE STRESS RESPONSE PROTEIN YAAA"/>
    <property type="match status" value="1"/>
</dbReference>
<dbReference type="Pfam" id="PF03883">
    <property type="entry name" value="H2O2_YaaD"/>
    <property type="match status" value="1"/>
</dbReference>
<keyword id="KW-1185">Reference proteome</keyword>
<accession>A9MR84</accession>
<sequence length="257" mass="29718">MLILISPAKTLDYQSPLATTRYTQPELLDHSQQLIHQVRQLSAPQIARLMGISDKLADLNATRFHDWQPHFTPDNARQAILAFKGDVYTGLQAETFSDADFDFAQQHLRMLSGLYGLLRPLDLMQPYRLEMGIRLENPRGKDLYQFWGDIITDKLNETLASQGDRVVINLASEEYFKSVKPKKLNAELIKPVFLDEKNGKFKVISFYAKKARGLMSRFIIENRLTKPEQLTAFNSEGYFFDEETSTQDELVFKRYEQ</sequence>
<comment type="similarity">
    <text evidence="1">Belongs to the UPF0246 family.</text>
</comment>
<gene>
    <name evidence="1" type="primary">yaaA</name>
    <name type="ordered locus">SARI_02987</name>
</gene>
<name>YAAA_SALAR</name>
<organism>
    <name type="scientific">Salmonella arizonae (strain ATCC BAA-731 / CDC346-86 / RSK2980)</name>
    <dbReference type="NCBI Taxonomy" id="41514"/>
    <lineage>
        <taxon>Bacteria</taxon>
        <taxon>Pseudomonadati</taxon>
        <taxon>Pseudomonadota</taxon>
        <taxon>Gammaproteobacteria</taxon>
        <taxon>Enterobacterales</taxon>
        <taxon>Enterobacteriaceae</taxon>
        <taxon>Salmonella</taxon>
    </lineage>
</organism>